<reference key="1">
    <citation type="journal article" date="2004" name="Nat. Biotechnol.">
        <title>The genome sequence of the extreme thermophile Thermus thermophilus.</title>
        <authorList>
            <person name="Henne A."/>
            <person name="Brueggemann H."/>
            <person name="Raasch C."/>
            <person name="Wiezer A."/>
            <person name="Hartsch T."/>
            <person name="Liesegang H."/>
            <person name="Johann A."/>
            <person name="Lienard T."/>
            <person name="Gohl O."/>
            <person name="Martinez-Arias R."/>
            <person name="Jacobi C."/>
            <person name="Starkuviene V."/>
            <person name="Schlenczeck S."/>
            <person name="Dencker S."/>
            <person name="Huber R."/>
            <person name="Klenk H.-P."/>
            <person name="Kramer W."/>
            <person name="Merkl R."/>
            <person name="Gottschalk G."/>
            <person name="Fritz H.-J."/>
        </authorList>
    </citation>
    <scope>NUCLEOTIDE SEQUENCE [LARGE SCALE GENOMIC DNA]</scope>
    <source>
        <strain>ATCC BAA-163 / DSM 7039 / HB27</strain>
    </source>
</reference>
<accession>Q72I14</accession>
<comment type="function">
    <text evidence="1">Binds to 23S rRNA. Forms part of two intersubunit bridges in the 70S ribosome.</text>
</comment>
<comment type="subunit">
    <text evidence="1">Part of the 50S ribosomal subunit. Forms a cluster with proteins L3 and L19. In the 70S ribosome, L14 and L19 interact and together make contacts with the 16S rRNA in bridges B5 and B8.</text>
</comment>
<comment type="similarity">
    <text evidence="1">Belongs to the universal ribosomal protein uL14 family.</text>
</comment>
<dbReference type="EMBL" id="AE017221">
    <property type="protein sequence ID" value="AAS81660.1"/>
    <property type="molecule type" value="Genomic_DNA"/>
</dbReference>
<dbReference type="RefSeq" id="WP_003043914.1">
    <property type="nucleotide sequence ID" value="NZ_CP133179.1"/>
</dbReference>
<dbReference type="PDB" id="4V4I">
    <property type="method" value="X-ray"/>
    <property type="resolution" value="3.71 A"/>
    <property type="chains" value="I=1-122"/>
</dbReference>
<dbReference type="PDB" id="4V4J">
    <property type="method" value="X-ray"/>
    <property type="resolution" value="3.83 A"/>
    <property type="chains" value="I=1-122"/>
</dbReference>
<dbReference type="PDB" id="4V63">
    <property type="method" value="X-ray"/>
    <property type="resolution" value="3.21 A"/>
    <property type="chains" value="BO/DO=1-122"/>
</dbReference>
<dbReference type="PDB" id="4V67">
    <property type="method" value="X-ray"/>
    <property type="resolution" value="3.00 A"/>
    <property type="chains" value="BO/DO=1-122"/>
</dbReference>
<dbReference type="PDB" id="4V7P">
    <property type="method" value="X-ray"/>
    <property type="resolution" value="3.62 A"/>
    <property type="chains" value="BK/CK=1-122"/>
</dbReference>
<dbReference type="PDB" id="4V83">
    <property type="method" value="X-ray"/>
    <property type="resolution" value="3.50 A"/>
    <property type="chains" value="BK/DK=1-122"/>
</dbReference>
<dbReference type="PDB" id="4V84">
    <property type="method" value="X-ray"/>
    <property type="resolution" value="3.40 A"/>
    <property type="chains" value="BK/DK=1-122"/>
</dbReference>
<dbReference type="PDB" id="4V9J">
    <property type="method" value="X-ray"/>
    <property type="resolution" value="3.86 A"/>
    <property type="chains" value="BO/DO=1-122"/>
</dbReference>
<dbReference type="PDB" id="4V9K">
    <property type="method" value="X-ray"/>
    <property type="resolution" value="3.50 A"/>
    <property type="chains" value="BO/DO=1-122"/>
</dbReference>
<dbReference type="PDB" id="4V9L">
    <property type="method" value="X-ray"/>
    <property type="resolution" value="3.50 A"/>
    <property type="chains" value="BO/DO=1-122"/>
</dbReference>
<dbReference type="PDB" id="4V9M">
    <property type="method" value="X-ray"/>
    <property type="resolution" value="4.00 A"/>
    <property type="chains" value="BO/DO=1-122"/>
</dbReference>
<dbReference type="PDB" id="4V9N">
    <property type="method" value="X-ray"/>
    <property type="resolution" value="3.40 A"/>
    <property type="chains" value="BO/DO=1-122"/>
</dbReference>
<dbReference type="PDB" id="4V9Q">
    <property type="method" value="X-ray"/>
    <property type="resolution" value="3.40 A"/>
    <property type="chains" value="AK/CK=1-122"/>
</dbReference>
<dbReference type="PDB" id="4W29">
    <property type="method" value="X-ray"/>
    <property type="resolution" value="3.80 A"/>
    <property type="chains" value="BO/DO=1-122"/>
</dbReference>
<dbReference type="PDB" id="4XEJ">
    <property type="method" value="X-ray"/>
    <property type="resolution" value="3.80 A"/>
    <property type="chains" value="AL14/BL14=1-122"/>
</dbReference>
<dbReference type="PDB" id="5J4D">
    <property type="method" value="X-ray"/>
    <property type="resolution" value="3.10 A"/>
    <property type="chains" value="L/QB=1-122"/>
</dbReference>
<dbReference type="PDB" id="5V8I">
    <property type="method" value="X-ray"/>
    <property type="resolution" value="3.25 A"/>
    <property type="chains" value="1O/2O=1-122"/>
</dbReference>
<dbReference type="PDB" id="6B4V">
    <property type="method" value="X-ray"/>
    <property type="resolution" value="3.40 A"/>
    <property type="chains" value="L/PB=1-122"/>
</dbReference>
<dbReference type="PDB" id="6BOH">
    <property type="method" value="X-ray"/>
    <property type="resolution" value="3.40 A"/>
    <property type="chains" value="L/QB=1-122"/>
</dbReference>
<dbReference type="PDB" id="6BOK">
    <property type="method" value="X-ray"/>
    <property type="resolution" value="3.55 A"/>
    <property type="chains" value="L/OB=1-122"/>
</dbReference>
<dbReference type="PDB" id="6N1D">
    <property type="method" value="X-ray"/>
    <property type="resolution" value="3.20 A"/>
    <property type="chains" value="AL14/BL14=1-122"/>
</dbReference>
<dbReference type="PDBsum" id="4V4I"/>
<dbReference type="PDBsum" id="4V4J"/>
<dbReference type="PDBsum" id="4V63"/>
<dbReference type="PDBsum" id="4V67"/>
<dbReference type="PDBsum" id="4V7P"/>
<dbReference type="PDBsum" id="4V83"/>
<dbReference type="PDBsum" id="4V84"/>
<dbReference type="PDBsum" id="4V9J"/>
<dbReference type="PDBsum" id="4V9K"/>
<dbReference type="PDBsum" id="4V9L"/>
<dbReference type="PDBsum" id="4V9M"/>
<dbReference type="PDBsum" id="4V9N"/>
<dbReference type="PDBsum" id="4V9Q"/>
<dbReference type="PDBsum" id="4W29"/>
<dbReference type="PDBsum" id="4XEJ"/>
<dbReference type="PDBsum" id="5J4D"/>
<dbReference type="PDBsum" id="5V8I"/>
<dbReference type="PDBsum" id="6B4V"/>
<dbReference type="PDBsum" id="6BOH"/>
<dbReference type="PDBsum" id="6BOK"/>
<dbReference type="PDBsum" id="6N1D"/>
<dbReference type="SMR" id="Q72I14"/>
<dbReference type="IntAct" id="Q72I14">
    <property type="interactions" value="4"/>
</dbReference>
<dbReference type="KEGG" id="tth:TT_C1318"/>
<dbReference type="eggNOG" id="COG0093">
    <property type="taxonomic scope" value="Bacteria"/>
</dbReference>
<dbReference type="HOGENOM" id="CLU_095071_2_1_0"/>
<dbReference type="OrthoDB" id="9806379at2"/>
<dbReference type="Proteomes" id="UP000000592">
    <property type="component" value="Chromosome"/>
</dbReference>
<dbReference type="GO" id="GO:0022625">
    <property type="term" value="C:cytosolic large ribosomal subunit"/>
    <property type="evidence" value="ECO:0007669"/>
    <property type="project" value="TreeGrafter"/>
</dbReference>
<dbReference type="GO" id="GO:0070180">
    <property type="term" value="F:large ribosomal subunit rRNA binding"/>
    <property type="evidence" value="ECO:0007669"/>
    <property type="project" value="TreeGrafter"/>
</dbReference>
<dbReference type="GO" id="GO:0003735">
    <property type="term" value="F:structural constituent of ribosome"/>
    <property type="evidence" value="ECO:0007669"/>
    <property type="project" value="InterPro"/>
</dbReference>
<dbReference type="GO" id="GO:0006412">
    <property type="term" value="P:translation"/>
    <property type="evidence" value="ECO:0007669"/>
    <property type="project" value="UniProtKB-UniRule"/>
</dbReference>
<dbReference type="CDD" id="cd00337">
    <property type="entry name" value="Ribosomal_uL14"/>
    <property type="match status" value="1"/>
</dbReference>
<dbReference type="FunFam" id="2.40.150.20:FF:000001">
    <property type="entry name" value="50S ribosomal protein L14"/>
    <property type="match status" value="1"/>
</dbReference>
<dbReference type="Gene3D" id="2.40.150.20">
    <property type="entry name" value="Ribosomal protein L14"/>
    <property type="match status" value="1"/>
</dbReference>
<dbReference type="HAMAP" id="MF_01367">
    <property type="entry name" value="Ribosomal_uL14"/>
    <property type="match status" value="1"/>
</dbReference>
<dbReference type="InterPro" id="IPR000218">
    <property type="entry name" value="Ribosomal_uL14"/>
</dbReference>
<dbReference type="InterPro" id="IPR005745">
    <property type="entry name" value="Ribosomal_uL14_bac-type"/>
</dbReference>
<dbReference type="InterPro" id="IPR019972">
    <property type="entry name" value="Ribosomal_uL14_CS"/>
</dbReference>
<dbReference type="InterPro" id="IPR036853">
    <property type="entry name" value="Ribosomal_uL14_sf"/>
</dbReference>
<dbReference type="NCBIfam" id="TIGR01067">
    <property type="entry name" value="rplN_bact"/>
    <property type="match status" value="1"/>
</dbReference>
<dbReference type="PANTHER" id="PTHR11761">
    <property type="entry name" value="50S/60S RIBOSOMAL PROTEIN L14/L23"/>
    <property type="match status" value="1"/>
</dbReference>
<dbReference type="PANTHER" id="PTHR11761:SF3">
    <property type="entry name" value="LARGE RIBOSOMAL SUBUNIT PROTEIN UL14M"/>
    <property type="match status" value="1"/>
</dbReference>
<dbReference type="Pfam" id="PF00238">
    <property type="entry name" value="Ribosomal_L14"/>
    <property type="match status" value="1"/>
</dbReference>
<dbReference type="SMART" id="SM01374">
    <property type="entry name" value="Ribosomal_L14"/>
    <property type="match status" value="1"/>
</dbReference>
<dbReference type="SUPFAM" id="SSF50193">
    <property type="entry name" value="Ribosomal protein L14"/>
    <property type="match status" value="1"/>
</dbReference>
<dbReference type="PROSITE" id="PS00049">
    <property type="entry name" value="RIBOSOMAL_L14"/>
    <property type="match status" value="1"/>
</dbReference>
<gene>
    <name evidence="1" type="primary">rplN</name>
    <name type="ordered locus">TT_C1318</name>
</gene>
<organism>
    <name type="scientific">Thermus thermophilus (strain ATCC BAA-163 / DSM 7039 / HB27)</name>
    <dbReference type="NCBI Taxonomy" id="262724"/>
    <lineage>
        <taxon>Bacteria</taxon>
        <taxon>Thermotogati</taxon>
        <taxon>Deinococcota</taxon>
        <taxon>Deinococci</taxon>
        <taxon>Thermales</taxon>
        <taxon>Thermaceae</taxon>
        <taxon>Thermus</taxon>
    </lineage>
</organism>
<evidence type="ECO:0000255" key="1">
    <source>
        <dbReference type="HAMAP-Rule" id="MF_01367"/>
    </source>
</evidence>
<evidence type="ECO:0000305" key="2"/>
<evidence type="ECO:0007829" key="3">
    <source>
        <dbReference type="PDB" id="4V67"/>
    </source>
</evidence>
<evidence type="ECO:0007829" key="4">
    <source>
        <dbReference type="PDB" id="4V84"/>
    </source>
</evidence>
<evidence type="ECO:0007829" key="5">
    <source>
        <dbReference type="PDB" id="4V9K"/>
    </source>
</evidence>
<evidence type="ECO:0007829" key="6">
    <source>
        <dbReference type="PDB" id="4V9L"/>
    </source>
</evidence>
<keyword id="KW-0002">3D-structure</keyword>
<keyword id="KW-0687">Ribonucleoprotein</keyword>
<keyword id="KW-0689">Ribosomal protein</keyword>
<keyword id="KW-0694">RNA-binding</keyword>
<keyword id="KW-0699">rRNA-binding</keyword>
<protein>
    <recommendedName>
        <fullName evidence="1">Large ribosomal subunit protein uL14</fullName>
    </recommendedName>
    <alternativeName>
        <fullName evidence="2">50S ribosomal protein L14</fullName>
    </alternativeName>
</protein>
<proteinExistence type="evidence at protein level"/>
<feature type="chain" id="PRO_0000266574" description="Large ribosomal subunit protein uL14">
    <location>
        <begin position="1"/>
        <end position="122"/>
    </location>
</feature>
<feature type="strand" evidence="3">
    <location>
        <begin position="7"/>
        <end position="10"/>
    </location>
</feature>
<feature type="strand" evidence="3">
    <location>
        <begin position="15"/>
        <end position="24"/>
    </location>
</feature>
<feature type="strand" evidence="3">
    <location>
        <begin position="26"/>
        <end position="29"/>
    </location>
</feature>
<feature type="strand" evidence="3">
    <location>
        <begin position="38"/>
        <end position="46"/>
    </location>
</feature>
<feature type="strand" evidence="5">
    <location>
        <begin position="48"/>
        <end position="52"/>
    </location>
</feature>
<feature type="strand" evidence="3">
    <location>
        <begin position="57"/>
        <end position="64"/>
    </location>
</feature>
<feature type="strand" evidence="6">
    <location>
        <begin position="69"/>
        <end position="71"/>
    </location>
</feature>
<feature type="turn" evidence="6">
    <location>
        <begin position="72"/>
        <end position="74"/>
    </location>
</feature>
<feature type="strand" evidence="3">
    <location>
        <begin position="76"/>
        <end position="81"/>
    </location>
</feature>
<feature type="strand" evidence="3">
    <location>
        <begin position="83"/>
        <end position="87"/>
    </location>
</feature>
<feature type="strand" evidence="4">
    <location>
        <begin position="89"/>
        <end position="91"/>
    </location>
</feature>
<feature type="strand" evidence="3">
    <location>
        <begin position="93"/>
        <end position="96"/>
    </location>
</feature>
<feature type="strand" evidence="5">
    <location>
        <begin position="100"/>
        <end position="102"/>
    </location>
</feature>
<feature type="helix" evidence="3">
    <location>
        <begin position="105"/>
        <end position="109"/>
    </location>
</feature>
<feature type="helix" evidence="3">
    <location>
        <begin position="112"/>
        <end position="117"/>
    </location>
</feature>
<feature type="strand" evidence="5">
    <location>
        <begin position="119"/>
        <end position="121"/>
    </location>
</feature>
<sequence length="122" mass="13289">MIQPQTYLEVADNTGARKIMCIRVLKGSNAKYATVGDVIVASVKEAIPRGAVKEGDVVKAVVVRTKKEVKRPDGSAIRFDDNAAVIINNQLEPRGTRVFGPVARELREKGFMKIVSLAPEVL</sequence>
<name>RL14_THET2</name>